<dbReference type="EMBL" id="AJ251025">
    <property type="protein sequence ID" value="CAB71322.1"/>
    <property type="molecule type" value="Genomic_DNA"/>
</dbReference>
<dbReference type="EMBL" id="AJ251026">
    <property type="protein sequence ID" value="CAB71323.1"/>
    <property type="molecule type" value="mRNA"/>
</dbReference>
<dbReference type="EMBL" id="AJ251027">
    <property type="protein sequence ID" value="CAB71324.1"/>
    <property type="molecule type" value="mRNA"/>
</dbReference>
<dbReference type="EMBL" id="AJ251028">
    <property type="protein sequence ID" value="CAB71325.1"/>
    <property type="molecule type" value="mRNA"/>
</dbReference>
<dbReference type="EMBL" id="AY358981">
    <property type="protein sequence ID" value="AAQ89340.1"/>
    <property type="molecule type" value="mRNA"/>
</dbReference>
<dbReference type="EMBL" id="AL732364">
    <property type="status" value="NOT_ANNOTATED_CDS"/>
    <property type="molecule type" value="Genomic_DNA"/>
</dbReference>
<dbReference type="EMBL" id="BC096717">
    <property type="protein sequence ID" value="AAH96717.1"/>
    <property type="molecule type" value="mRNA"/>
</dbReference>
<dbReference type="EMBL" id="BC098125">
    <property type="protein sequence ID" value="AAH98125.1"/>
    <property type="molecule type" value="mRNA"/>
</dbReference>
<dbReference type="EMBL" id="BC098151">
    <property type="protein sequence ID" value="AAH98151.1"/>
    <property type="molecule type" value="mRNA"/>
</dbReference>
<dbReference type="EMBL" id="BC098340">
    <property type="protein sequence ID" value="AAH98340.1"/>
    <property type="molecule type" value="mRNA"/>
</dbReference>
<dbReference type="CCDS" id="CCDS6961.1">
    <molecule id="Q9NPH6-1"/>
</dbReference>
<dbReference type="RefSeq" id="NP_001275916.1">
    <molecule id="Q9NPH6-1"/>
    <property type="nucleotide sequence ID" value="NM_001288987.2"/>
</dbReference>
<dbReference type="RefSeq" id="NP_055396.1">
    <molecule id="Q9NPH6-1"/>
    <property type="nucleotide sequence ID" value="NM_014581.4"/>
</dbReference>
<dbReference type="SMR" id="Q9NPH6"/>
<dbReference type="BioGRID" id="119014">
    <property type="interactions" value="2"/>
</dbReference>
<dbReference type="FunCoup" id="Q9NPH6">
    <property type="interactions" value="6"/>
</dbReference>
<dbReference type="IntAct" id="Q9NPH6">
    <property type="interactions" value="1"/>
</dbReference>
<dbReference type="STRING" id="9606.ENSP00000484615"/>
<dbReference type="iPTMnet" id="Q9NPH6"/>
<dbReference type="PhosphoSitePlus" id="Q9NPH6"/>
<dbReference type="BioMuta" id="OBP2B"/>
<dbReference type="MassIVE" id="Q9NPH6"/>
<dbReference type="PaxDb" id="9606-ENSP00000484615"/>
<dbReference type="PeptideAtlas" id="Q9NPH6"/>
<dbReference type="ProteomicsDB" id="82010">
    <molecule id="Q9NPH6-1"/>
</dbReference>
<dbReference type="TopDownProteomics" id="Q9NPH6-2">
    <molecule id="Q9NPH6-2"/>
</dbReference>
<dbReference type="TopDownProteomics" id="Q9NPH6-3">
    <molecule id="Q9NPH6-3"/>
</dbReference>
<dbReference type="Antibodypedia" id="63951">
    <property type="antibodies" value="35 antibodies from 7 providers"/>
</dbReference>
<dbReference type="DNASU" id="29989"/>
<dbReference type="Ensembl" id="ENST00000372034.8">
    <molecule id="Q9NPH6-1"/>
    <property type="protein sequence ID" value="ENSP00000361104.3"/>
    <property type="gene ID" value="ENSG00000171102.16"/>
</dbReference>
<dbReference type="Ensembl" id="ENST00000473737.5">
    <molecule id="Q9NPH6-2"/>
    <property type="protein sequence ID" value="ENSP00000434927.1"/>
    <property type="gene ID" value="ENSG00000171102.16"/>
</dbReference>
<dbReference type="Ensembl" id="ENST00000618116.4">
    <molecule id="Q9NPH6-1"/>
    <property type="protein sequence ID" value="ENSP00000484615.1"/>
    <property type="gene ID" value="ENSG00000171102.16"/>
</dbReference>
<dbReference type="Ensembl" id="ENST00000627758.2">
    <molecule id="Q9NPH6-1"/>
    <property type="protein sequence ID" value="ENSP00000487521.1"/>
    <property type="gene ID" value="ENSG00000280584.3"/>
</dbReference>
<dbReference type="Ensembl" id="ENST00000628865.2">
    <molecule id="Q9NPH6-1"/>
    <property type="protein sequence ID" value="ENSP00000486108.1"/>
    <property type="gene ID" value="ENSG00000280584.3"/>
</dbReference>
<dbReference type="Ensembl" id="ENST00000630166.2">
    <molecule id="Q9NPH6-2"/>
    <property type="protein sequence ID" value="ENSP00000486815.1"/>
    <property type="gene ID" value="ENSG00000280584.3"/>
</dbReference>
<dbReference type="GeneID" id="29989"/>
<dbReference type="KEGG" id="hsa:29989"/>
<dbReference type="MANE-Select" id="ENST00000372034.8">
    <property type="protein sequence ID" value="ENSP00000361104.3"/>
    <property type="RefSeq nucleotide sequence ID" value="NM_014581.4"/>
    <property type="RefSeq protein sequence ID" value="NP_055396.1"/>
</dbReference>
<dbReference type="UCSC" id="uc004ccz.5">
    <molecule id="Q9NPH6-1"/>
    <property type="organism name" value="human"/>
</dbReference>
<dbReference type="AGR" id="HGNC:23381"/>
<dbReference type="CTD" id="29989"/>
<dbReference type="DisGeNET" id="29989"/>
<dbReference type="GeneCards" id="OBP2B"/>
<dbReference type="HGNC" id="HGNC:23381">
    <property type="gene designation" value="OBP2B"/>
</dbReference>
<dbReference type="HPA" id="ENSG00000171102">
    <property type="expression patterns" value="Tissue enhanced (skin, testis)"/>
</dbReference>
<dbReference type="MIM" id="604606">
    <property type="type" value="gene"/>
</dbReference>
<dbReference type="neXtProt" id="NX_Q9NPH6"/>
<dbReference type="OpenTargets" id="ENSG00000171102"/>
<dbReference type="PharmGKB" id="PA134883553"/>
<dbReference type="VEuPathDB" id="HostDB:ENSG00000171102"/>
<dbReference type="eggNOG" id="ENOG502S22P">
    <property type="taxonomic scope" value="Eukaryota"/>
</dbReference>
<dbReference type="GeneTree" id="ENSGT01050000244868"/>
<dbReference type="HOGENOM" id="CLU_125034_0_0_1"/>
<dbReference type="InParanoid" id="Q9NPH6"/>
<dbReference type="OMA" id="DHFVFYC"/>
<dbReference type="OrthoDB" id="9621919at2759"/>
<dbReference type="PAN-GO" id="Q9NPH6">
    <property type="GO annotations" value="1 GO annotation based on evolutionary models"/>
</dbReference>
<dbReference type="PhylomeDB" id="Q9NPH6"/>
<dbReference type="TreeFam" id="TF338197"/>
<dbReference type="PathwayCommons" id="Q9NPH6"/>
<dbReference type="SignaLink" id="Q9NPH6"/>
<dbReference type="BioGRID-ORCS" id="29989">
    <property type="hits" value="7 hits in 714 CRISPR screens"/>
</dbReference>
<dbReference type="GenomeRNAi" id="29989"/>
<dbReference type="Pharos" id="Q9NPH6">
    <property type="development level" value="Tdark"/>
</dbReference>
<dbReference type="PRO" id="PR:Q9NPH6"/>
<dbReference type="Proteomes" id="UP000005640">
    <property type="component" value="Chromosome 9"/>
</dbReference>
<dbReference type="RNAct" id="Q9NPH6">
    <property type="molecule type" value="protein"/>
</dbReference>
<dbReference type="Bgee" id="ENSG00000171102">
    <property type="expression patterns" value="Expressed in right testis and 49 other cell types or tissues"/>
</dbReference>
<dbReference type="ExpressionAtlas" id="Q9NPH6">
    <property type="expression patterns" value="baseline and differential"/>
</dbReference>
<dbReference type="GO" id="GO:0005615">
    <property type="term" value="C:extracellular space"/>
    <property type="evidence" value="ECO:0000318"/>
    <property type="project" value="GO_Central"/>
</dbReference>
<dbReference type="GO" id="GO:0005549">
    <property type="term" value="F:odorant binding"/>
    <property type="evidence" value="ECO:0000303"/>
    <property type="project" value="UniProtKB"/>
</dbReference>
<dbReference type="GO" id="GO:0036094">
    <property type="term" value="F:small molecule binding"/>
    <property type="evidence" value="ECO:0007669"/>
    <property type="project" value="InterPro"/>
</dbReference>
<dbReference type="GO" id="GO:0007635">
    <property type="term" value="P:chemosensory behavior"/>
    <property type="evidence" value="ECO:0000304"/>
    <property type="project" value="ProtInc"/>
</dbReference>
<dbReference type="GO" id="GO:0007608">
    <property type="term" value="P:sensory perception of smell"/>
    <property type="evidence" value="ECO:0000303"/>
    <property type="project" value="UniProtKB"/>
</dbReference>
<dbReference type="CDD" id="cd19414">
    <property type="entry name" value="lipocalin_1_3_4_13-like"/>
    <property type="match status" value="1"/>
</dbReference>
<dbReference type="FunFam" id="2.40.128.20:FF:000020">
    <property type="entry name" value="Lipocalin 1"/>
    <property type="match status" value="1"/>
</dbReference>
<dbReference type="Gene3D" id="2.40.128.20">
    <property type="match status" value="1"/>
</dbReference>
<dbReference type="InterPro" id="IPR012674">
    <property type="entry name" value="Calycin"/>
</dbReference>
<dbReference type="InterPro" id="IPR002345">
    <property type="entry name" value="Lipocalin"/>
</dbReference>
<dbReference type="InterPro" id="IPR000566">
    <property type="entry name" value="Lipocln_cytosolic_FA-bd_dom"/>
</dbReference>
<dbReference type="InterPro" id="IPR002450">
    <property type="entry name" value="von_Ebner_gland"/>
</dbReference>
<dbReference type="PANTHER" id="PTHR11430">
    <property type="entry name" value="LIPOCALIN"/>
    <property type="match status" value="1"/>
</dbReference>
<dbReference type="PANTHER" id="PTHR11430:SF129">
    <property type="entry name" value="ODORANT-BINDING PROTEIN 2A-RELATED"/>
    <property type="match status" value="1"/>
</dbReference>
<dbReference type="Pfam" id="PF00061">
    <property type="entry name" value="Lipocalin"/>
    <property type="match status" value="1"/>
</dbReference>
<dbReference type="PRINTS" id="PR01175">
    <property type="entry name" value="VNEBNERGLAND"/>
</dbReference>
<dbReference type="SUPFAM" id="SSF50814">
    <property type="entry name" value="Lipocalins"/>
    <property type="match status" value="1"/>
</dbReference>
<comment type="function">
    <text>Probably binds and transports small hydrophobic volatile molecules.</text>
</comment>
<comment type="subcellular location">
    <subcellularLocation>
        <location evidence="4">Secreted</location>
    </subcellularLocation>
</comment>
<comment type="alternative products">
    <event type="alternative splicing"/>
    <isoform>
        <id>Q9NPH6-1</id>
        <name>Ba</name>
        <sequence type="displayed"/>
    </isoform>
    <isoform>
        <id>Q9NPH6-2</id>
        <name>Bb</name>
        <sequence type="described" ref="VSP_003138"/>
    </isoform>
    <isoform>
        <id>Q9NPH6-3</id>
        <name>Bg</name>
        <sequence type="described" ref="VSP_003139"/>
    </isoform>
</comment>
<comment type="tissue specificity">
    <text>Strongly expressed in genital sphere organs such as the prostate and mammary glands.</text>
</comment>
<comment type="similarity">
    <text evidence="4">Belongs to the calycin superfamily. Lipocalin family.</text>
</comment>
<name>OBP2B_HUMAN</name>
<keyword id="KW-0025">Alternative splicing</keyword>
<keyword id="KW-1015">Disulfide bond</keyword>
<keyword id="KW-0552">Olfaction</keyword>
<keyword id="KW-1267">Proteomics identification</keyword>
<keyword id="KW-1185">Reference proteome</keyword>
<keyword id="KW-0964">Secreted</keyword>
<keyword id="KW-0716">Sensory transduction</keyword>
<keyword id="KW-0732">Signal</keyword>
<keyword id="KW-0813">Transport</keyword>
<sequence length="170" mass="19457">MKTLFLGVTLGLAAALSFTLEEEDITGTWYVKAMVVDKDFPEDRRPRKVSPVKVTALGGGKLEATFTFMREDRCIQKKILMRKTEEPGKYSAYGGRKLMYLQELPRRDHYIFYCKDQHHGGLLHMGKLVGRNSDTNREALEEFKKLVQRKGLSEEDIFTPLQTGSCVPEH</sequence>
<reference key="1">
    <citation type="journal article" date="2000" name="Hum. Mol. Genet.">
        <title>A novel human odorant-binding protein gene family resulting from genomic duplicons at 9q34: differential expression in the oral and genital spheres.</title>
        <authorList>
            <person name="Lacazette E."/>
            <person name="Gachon A.-M."/>
            <person name="Pitiot G."/>
        </authorList>
    </citation>
    <scope>NUCLEOTIDE SEQUENCE [GENOMIC DNA / MRNA] (ISOFORMS BA; BB AND BG)</scope>
</reference>
<reference key="2">
    <citation type="journal article" date="2003" name="Genome Res.">
        <title>The secreted protein discovery initiative (SPDI), a large-scale effort to identify novel human secreted and transmembrane proteins: a bioinformatics assessment.</title>
        <authorList>
            <person name="Clark H.F."/>
            <person name="Gurney A.L."/>
            <person name="Abaya E."/>
            <person name="Baker K."/>
            <person name="Baldwin D.T."/>
            <person name="Brush J."/>
            <person name="Chen J."/>
            <person name="Chow B."/>
            <person name="Chui C."/>
            <person name="Crowley C."/>
            <person name="Currell B."/>
            <person name="Deuel B."/>
            <person name="Dowd P."/>
            <person name="Eaton D."/>
            <person name="Foster J.S."/>
            <person name="Grimaldi C."/>
            <person name="Gu Q."/>
            <person name="Hass P.E."/>
            <person name="Heldens S."/>
            <person name="Huang A."/>
            <person name="Kim H.S."/>
            <person name="Klimowski L."/>
            <person name="Jin Y."/>
            <person name="Johnson S."/>
            <person name="Lee J."/>
            <person name="Lewis L."/>
            <person name="Liao D."/>
            <person name="Mark M.R."/>
            <person name="Robbie E."/>
            <person name="Sanchez C."/>
            <person name="Schoenfeld J."/>
            <person name="Seshagiri S."/>
            <person name="Simmons L."/>
            <person name="Singh J."/>
            <person name="Smith V."/>
            <person name="Stinson J."/>
            <person name="Vagts A."/>
            <person name="Vandlen R.L."/>
            <person name="Watanabe C."/>
            <person name="Wieand D."/>
            <person name="Woods K."/>
            <person name="Xie M.-H."/>
            <person name="Yansura D.G."/>
            <person name="Yi S."/>
            <person name="Yu G."/>
            <person name="Yuan J."/>
            <person name="Zhang M."/>
            <person name="Zhang Z."/>
            <person name="Goddard A.D."/>
            <person name="Wood W.I."/>
            <person name="Godowski P.J."/>
            <person name="Gray A.M."/>
        </authorList>
    </citation>
    <scope>NUCLEOTIDE SEQUENCE [LARGE SCALE MRNA] (ISOFORM BA)</scope>
</reference>
<reference key="3">
    <citation type="journal article" date="2004" name="Nature">
        <title>DNA sequence and analysis of human chromosome 9.</title>
        <authorList>
            <person name="Humphray S.J."/>
            <person name="Oliver K."/>
            <person name="Hunt A.R."/>
            <person name="Plumb R.W."/>
            <person name="Loveland J.E."/>
            <person name="Howe K.L."/>
            <person name="Andrews T.D."/>
            <person name="Searle S."/>
            <person name="Hunt S.E."/>
            <person name="Scott C.E."/>
            <person name="Jones M.C."/>
            <person name="Ainscough R."/>
            <person name="Almeida J.P."/>
            <person name="Ambrose K.D."/>
            <person name="Ashwell R.I.S."/>
            <person name="Babbage A.K."/>
            <person name="Babbage S."/>
            <person name="Bagguley C.L."/>
            <person name="Bailey J."/>
            <person name="Banerjee R."/>
            <person name="Barker D.J."/>
            <person name="Barlow K.F."/>
            <person name="Bates K."/>
            <person name="Beasley H."/>
            <person name="Beasley O."/>
            <person name="Bird C.P."/>
            <person name="Bray-Allen S."/>
            <person name="Brown A.J."/>
            <person name="Brown J.Y."/>
            <person name="Burford D."/>
            <person name="Burrill W."/>
            <person name="Burton J."/>
            <person name="Carder C."/>
            <person name="Carter N.P."/>
            <person name="Chapman J.C."/>
            <person name="Chen Y."/>
            <person name="Clarke G."/>
            <person name="Clark S.Y."/>
            <person name="Clee C.M."/>
            <person name="Clegg S."/>
            <person name="Collier R.E."/>
            <person name="Corby N."/>
            <person name="Crosier M."/>
            <person name="Cummings A.T."/>
            <person name="Davies J."/>
            <person name="Dhami P."/>
            <person name="Dunn M."/>
            <person name="Dutta I."/>
            <person name="Dyer L.W."/>
            <person name="Earthrowl M.E."/>
            <person name="Faulkner L."/>
            <person name="Fleming C.J."/>
            <person name="Frankish A."/>
            <person name="Frankland J.A."/>
            <person name="French L."/>
            <person name="Fricker D.G."/>
            <person name="Garner P."/>
            <person name="Garnett J."/>
            <person name="Ghori J."/>
            <person name="Gilbert J.G.R."/>
            <person name="Glison C."/>
            <person name="Grafham D.V."/>
            <person name="Gribble S."/>
            <person name="Griffiths C."/>
            <person name="Griffiths-Jones S."/>
            <person name="Grocock R."/>
            <person name="Guy J."/>
            <person name="Hall R.E."/>
            <person name="Hammond S."/>
            <person name="Harley J.L."/>
            <person name="Harrison E.S.I."/>
            <person name="Hart E.A."/>
            <person name="Heath P.D."/>
            <person name="Henderson C.D."/>
            <person name="Hopkins B.L."/>
            <person name="Howard P.J."/>
            <person name="Howden P.J."/>
            <person name="Huckle E."/>
            <person name="Johnson C."/>
            <person name="Johnson D."/>
            <person name="Joy A.A."/>
            <person name="Kay M."/>
            <person name="Keenan S."/>
            <person name="Kershaw J.K."/>
            <person name="Kimberley A.M."/>
            <person name="King A."/>
            <person name="Knights A."/>
            <person name="Laird G.K."/>
            <person name="Langford C."/>
            <person name="Lawlor S."/>
            <person name="Leongamornlert D.A."/>
            <person name="Leversha M."/>
            <person name="Lloyd C."/>
            <person name="Lloyd D.M."/>
            <person name="Lovell J."/>
            <person name="Martin S."/>
            <person name="Mashreghi-Mohammadi M."/>
            <person name="Matthews L."/>
            <person name="McLaren S."/>
            <person name="McLay K.E."/>
            <person name="McMurray A."/>
            <person name="Milne S."/>
            <person name="Nickerson T."/>
            <person name="Nisbett J."/>
            <person name="Nordsiek G."/>
            <person name="Pearce A.V."/>
            <person name="Peck A.I."/>
            <person name="Porter K.M."/>
            <person name="Pandian R."/>
            <person name="Pelan S."/>
            <person name="Phillimore B."/>
            <person name="Povey S."/>
            <person name="Ramsey Y."/>
            <person name="Rand V."/>
            <person name="Scharfe M."/>
            <person name="Sehra H.K."/>
            <person name="Shownkeen R."/>
            <person name="Sims S.K."/>
            <person name="Skuce C.D."/>
            <person name="Smith M."/>
            <person name="Steward C.A."/>
            <person name="Swarbreck D."/>
            <person name="Sycamore N."/>
            <person name="Tester J."/>
            <person name="Thorpe A."/>
            <person name="Tracey A."/>
            <person name="Tromans A."/>
            <person name="Thomas D.W."/>
            <person name="Wall M."/>
            <person name="Wallis J.M."/>
            <person name="West A.P."/>
            <person name="Whitehead S.L."/>
            <person name="Willey D.L."/>
            <person name="Williams S.A."/>
            <person name="Wilming L."/>
            <person name="Wray P.W."/>
            <person name="Young L."/>
            <person name="Ashurst J.L."/>
            <person name="Coulson A."/>
            <person name="Blocker H."/>
            <person name="Durbin R.M."/>
            <person name="Sulston J.E."/>
            <person name="Hubbard T."/>
            <person name="Jackson M.J."/>
            <person name="Bentley D.R."/>
            <person name="Beck S."/>
            <person name="Rogers J."/>
            <person name="Dunham I."/>
        </authorList>
    </citation>
    <scope>NUCLEOTIDE SEQUENCE [LARGE SCALE GENOMIC DNA]</scope>
</reference>
<reference key="4">
    <citation type="journal article" date="2004" name="Genome Res.">
        <title>The status, quality, and expansion of the NIH full-length cDNA project: the Mammalian Gene Collection (MGC).</title>
        <authorList>
            <consortium name="The MGC Project Team"/>
        </authorList>
    </citation>
    <scope>NUCLEOTIDE SEQUENCE [LARGE SCALE MRNA] (ISOFORM BA)</scope>
</reference>
<feature type="signal peptide" evidence="2">
    <location>
        <begin position="1"/>
        <end position="15"/>
    </location>
</feature>
<feature type="chain" id="PRO_0000017938" description="Odorant-binding protein 2b">
    <location>
        <begin position="16"/>
        <end position="170"/>
    </location>
</feature>
<feature type="disulfide bond" evidence="1">
    <location>
        <begin position="74"/>
        <end position="166"/>
    </location>
</feature>
<feature type="splice variant" id="VSP_003139" description="In isoform Bg." evidence="3">
    <original>ITGTWYVKAMVVDKDFPEDRRPRKVSPVKVTALGGGKLEATFTFMREDRCIQKKILMRKTEEPGKYSAYGGRKLMYLQELPRRDHYIFYCKDQHHGGLLHMGKLVGRNSDTNREALEEFKKLVQRKGLSEEDIFTPLQTGSCVPEH</original>
    <variation>EGGSVHPEENPDAEDGGAWQIQRLWGQEAHIPAGAAQEGPLHLLLQRPAPWGPAPHGKACG</variation>
    <location>
        <begin position="25"/>
        <end position="170"/>
    </location>
</feature>
<feature type="splice variant" id="VSP_003138" description="In isoform Bb." evidence="3">
    <original>YGGRKLMYLQELPRRDHYIFYCKDQHHGGLLHMGKLVGRNSDTNREALEEFKKLVQRKGLSEEDIFTPLQTGSCVPEH</original>
    <variation>CLSAVEMDQITPALWEALAIDTLRKLRIGTRRPRIRWGQEAHVPAGAAQEGPLHLLLQRPAPWGPAPHGKACG</variation>
    <location>
        <begin position="93"/>
        <end position="170"/>
    </location>
</feature>
<feature type="sequence variant" id="VAR_050177" description="In dbSNP:rs11244035.">
    <original>V</original>
    <variation>I</variation>
    <location>
        <position position="167"/>
    </location>
</feature>
<protein>
    <recommendedName>
        <fullName>Odorant-binding protein 2b</fullName>
    </recommendedName>
    <alternativeName>
        <fullName>Odorant-binding protein IIb</fullName>
        <shortName>OBPIIb</shortName>
    </alternativeName>
</protein>
<accession>Q9NPH6</accession>
<accession>Q5VSP6</accession>
<accession>Q9NY51</accession>
<accession>Q9NY52</accession>
<gene>
    <name type="primary">OBP2B</name>
    <name type="ORF">UNQ653/PRO1283</name>
</gene>
<proteinExistence type="evidence at protein level"/>
<organism>
    <name type="scientific">Homo sapiens</name>
    <name type="common">Human</name>
    <dbReference type="NCBI Taxonomy" id="9606"/>
    <lineage>
        <taxon>Eukaryota</taxon>
        <taxon>Metazoa</taxon>
        <taxon>Chordata</taxon>
        <taxon>Craniata</taxon>
        <taxon>Vertebrata</taxon>
        <taxon>Euteleostomi</taxon>
        <taxon>Mammalia</taxon>
        <taxon>Eutheria</taxon>
        <taxon>Euarchontoglires</taxon>
        <taxon>Primates</taxon>
        <taxon>Haplorrhini</taxon>
        <taxon>Catarrhini</taxon>
        <taxon>Hominidae</taxon>
        <taxon>Homo</taxon>
    </lineage>
</organism>
<evidence type="ECO:0000250" key="1"/>
<evidence type="ECO:0000255" key="2"/>
<evidence type="ECO:0000303" key="3">
    <source>
    </source>
</evidence>
<evidence type="ECO:0000305" key="4"/>